<organism>
    <name type="scientific">Bos taurus</name>
    <name type="common">Bovine</name>
    <dbReference type="NCBI Taxonomy" id="9913"/>
    <lineage>
        <taxon>Eukaryota</taxon>
        <taxon>Metazoa</taxon>
        <taxon>Chordata</taxon>
        <taxon>Craniata</taxon>
        <taxon>Vertebrata</taxon>
        <taxon>Euteleostomi</taxon>
        <taxon>Mammalia</taxon>
        <taxon>Eutheria</taxon>
        <taxon>Laurasiatheria</taxon>
        <taxon>Artiodactyla</taxon>
        <taxon>Ruminantia</taxon>
        <taxon>Pecora</taxon>
        <taxon>Bovidae</taxon>
        <taxon>Bovinae</taxon>
        <taxon>Bos</taxon>
    </lineage>
</organism>
<proteinExistence type="evidence at transcript level"/>
<dbReference type="EMBL" id="BC112850">
    <property type="protein sequence ID" value="AAI12851.1"/>
    <property type="molecule type" value="mRNA"/>
</dbReference>
<dbReference type="RefSeq" id="NP_001039474.1">
    <property type="nucleotide sequence ID" value="NM_001046009.2"/>
</dbReference>
<dbReference type="FunCoup" id="Q2KHX3">
    <property type="interactions" value="1610"/>
</dbReference>
<dbReference type="STRING" id="9913.ENSBTAP00000003318"/>
<dbReference type="SwissPalm" id="Q2KHX3"/>
<dbReference type="PaxDb" id="9913-ENSBTAP00000003318"/>
<dbReference type="GeneID" id="508703"/>
<dbReference type="KEGG" id="bta:508703"/>
<dbReference type="CTD" id="11230"/>
<dbReference type="VEuPathDB" id="HostDB:ENSBTAG00000002562"/>
<dbReference type="eggNOG" id="KOG4050">
    <property type="taxonomic scope" value="Eukaryota"/>
</dbReference>
<dbReference type="HOGENOM" id="CLU_097683_0_0_1"/>
<dbReference type="InParanoid" id="Q2KHX3"/>
<dbReference type="OMA" id="GDPQRWC"/>
<dbReference type="OrthoDB" id="18213at2759"/>
<dbReference type="TreeFam" id="TF105479"/>
<dbReference type="Proteomes" id="UP000009136">
    <property type="component" value="Chromosome X"/>
</dbReference>
<dbReference type="Bgee" id="ENSBTAG00000002562">
    <property type="expression patterns" value="Expressed in trachea and 102 other cell types or tissues"/>
</dbReference>
<dbReference type="GO" id="GO:0010008">
    <property type="term" value="C:endosome membrane"/>
    <property type="evidence" value="ECO:0007669"/>
    <property type="project" value="UniProtKB-SubCell"/>
</dbReference>
<dbReference type="GO" id="GO:0016020">
    <property type="term" value="C:membrane"/>
    <property type="evidence" value="ECO:0000318"/>
    <property type="project" value="GO_Central"/>
</dbReference>
<dbReference type="GO" id="GO:0015031">
    <property type="term" value="P:protein transport"/>
    <property type="evidence" value="ECO:0007669"/>
    <property type="project" value="UniProtKB-KW"/>
</dbReference>
<dbReference type="InterPro" id="IPR004895">
    <property type="entry name" value="Prenylated_rab_accept_PRA1"/>
</dbReference>
<dbReference type="PANTHER" id="PTHR12859:SF1">
    <property type="entry name" value="PRA1 FAMILY PROTEIN 2"/>
    <property type="match status" value="1"/>
</dbReference>
<dbReference type="PANTHER" id="PTHR12859">
    <property type="entry name" value="PRA1 PROTEIN"/>
    <property type="match status" value="1"/>
</dbReference>
<dbReference type="Pfam" id="PF03208">
    <property type="entry name" value="PRA1"/>
    <property type="match status" value="1"/>
</dbReference>
<keyword id="KW-0967">Endosome</keyword>
<keyword id="KW-0472">Membrane</keyword>
<keyword id="KW-0653">Protein transport</keyword>
<keyword id="KW-1185">Reference proteome</keyword>
<keyword id="KW-0812">Transmembrane</keyword>
<keyword id="KW-1133">Transmembrane helix</keyword>
<keyword id="KW-0813">Transport</keyword>
<gene>
    <name type="primary">PRAF2</name>
</gene>
<name>PRAF2_BOVIN</name>
<sequence>MSEVRLPPLRALDDFVLGSARLVAPDPCDPQRWCHRVINNLLYYQTNYLICFGLGLALAGYVRPLHTLLSALVVAVALGMLVCAAENRAAVRRCRRSHPAACLAAVLAVGFLVLWAAGGAGTFLLSIAGPVLLILVHASLRLRNLKNKIENKIESIGLKRTPMGLLLEALGQEQEAGS</sequence>
<protein>
    <recommendedName>
        <fullName>PRA1 family protein 2</fullName>
    </recommendedName>
</protein>
<reference key="1">
    <citation type="submission" date="2006-01" db="EMBL/GenBank/DDBJ databases">
        <authorList>
            <consortium name="NIH - Mammalian Gene Collection (MGC) project"/>
        </authorList>
    </citation>
    <scope>NUCLEOTIDE SEQUENCE [LARGE SCALE MRNA]</scope>
    <source>
        <strain>Hereford</strain>
        <tissue>Kidney</tissue>
    </source>
</reference>
<accession>Q2KHX3</accession>
<evidence type="ECO:0000250" key="1"/>
<evidence type="ECO:0000255" key="2"/>
<evidence type="ECO:0000305" key="3"/>
<comment type="function">
    <text evidence="1">May be involved in ER/Golgi transport and vesicular traffic. Plays a proapoptotic role in cerulenin-induced neuroblastoma apoptosis (By similarity).</text>
</comment>
<comment type="subunit">
    <text evidence="1">Interacts with CCR5 and GDE1.</text>
</comment>
<comment type="subcellular location">
    <subcellularLocation>
        <location evidence="1">Endosome membrane</location>
        <topology evidence="1">Multi-pass membrane protein</topology>
    </subcellularLocation>
</comment>
<comment type="similarity">
    <text evidence="3">Belongs to the PRA1 family.</text>
</comment>
<feature type="chain" id="PRO_0000234485" description="PRA1 family protein 2">
    <location>
        <begin position="1"/>
        <end position="178"/>
    </location>
</feature>
<feature type="topological domain" description="Cytoplasmic" evidence="2">
    <location>
        <begin position="1"/>
        <end position="41"/>
    </location>
</feature>
<feature type="transmembrane region" description="Helical" evidence="2">
    <location>
        <begin position="42"/>
        <end position="62"/>
    </location>
</feature>
<feature type="topological domain" description="Extracellular" evidence="2">
    <location>
        <begin position="63"/>
        <end position="64"/>
    </location>
</feature>
<feature type="transmembrane region" description="Helical" evidence="2">
    <location>
        <begin position="65"/>
        <end position="85"/>
    </location>
</feature>
<feature type="topological domain" description="Cytoplasmic" evidence="2">
    <location>
        <begin position="86"/>
        <end position="96"/>
    </location>
</feature>
<feature type="transmembrane region" description="Helical" evidence="2">
    <location>
        <begin position="97"/>
        <end position="119"/>
    </location>
</feature>
<feature type="topological domain" description="Extracellular" evidence="2">
    <location>
        <begin position="120"/>
        <end position="122"/>
    </location>
</feature>
<feature type="transmembrane region" description="Helical" evidence="2">
    <location>
        <begin position="123"/>
        <end position="140"/>
    </location>
</feature>
<feature type="topological domain" description="Cytoplasmic" evidence="2">
    <location>
        <begin position="141"/>
        <end position="178"/>
    </location>
</feature>